<dbReference type="EMBL" id="CU329670">
    <property type="protein sequence ID" value="CAB60696.1"/>
    <property type="molecule type" value="Genomic_DNA"/>
</dbReference>
<dbReference type="PIR" id="T50145">
    <property type="entry name" value="T50145"/>
</dbReference>
<dbReference type="RefSeq" id="NP_593143.1">
    <property type="nucleotide sequence ID" value="NM_001018540.2"/>
</dbReference>
<dbReference type="SMR" id="Q9UTE8"/>
<dbReference type="BioGRID" id="278436">
    <property type="interactions" value="10"/>
</dbReference>
<dbReference type="FunCoup" id="Q9UTE8">
    <property type="interactions" value="222"/>
</dbReference>
<dbReference type="STRING" id="284812.Q9UTE8"/>
<dbReference type="PaxDb" id="4896-SPAC222.04c.1"/>
<dbReference type="EnsemblFungi" id="SPAC222.04c.1">
    <property type="protein sequence ID" value="SPAC222.04c.1:pep"/>
    <property type="gene ID" value="SPAC222.04c"/>
</dbReference>
<dbReference type="GeneID" id="2541949"/>
<dbReference type="KEGG" id="spo:2541949"/>
<dbReference type="PomBase" id="SPAC222.04c">
    <property type="gene designation" value="ies6"/>
</dbReference>
<dbReference type="VEuPathDB" id="FungiDB:SPAC222.04c"/>
<dbReference type="eggNOG" id="KOG4137">
    <property type="taxonomic scope" value="Eukaryota"/>
</dbReference>
<dbReference type="HOGENOM" id="CLU_071116_2_1_1"/>
<dbReference type="InParanoid" id="Q9UTE8"/>
<dbReference type="OMA" id="KNCVYRP"/>
<dbReference type="PhylomeDB" id="Q9UTE8"/>
<dbReference type="PRO" id="PR:Q9UTE8"/>
<dbReference type="Proteomes" id="UP000002485">
    <property type="component" value="Chromosome I"/>
</dbReference>
<dbReference type="GO" id="GO:0000785">
    <property type="term" value="C:chromatin"/>
    <property type="evidence" value="ECO:0000314"/>
    <property type="project" value="PomBase"/>
</dbReference>
<dbReference type="GO" id="GO:0005737">
    <property type="term" value="C:cytoplasm"/>
    <property type="evidence" value="ECO:0007005"/>
    <property type="project" value="PomBase"/>
</dbReference>
<dbReference type="GO" id="GO:0031011">
    <property type="term" value="C:Ino80 complex"/>
    <property type="evidence" value="ECO:0000314"/>
    <property type="project" value="PomBase"/>
</dbReference>
<dbReference type="GO" id="GO:0034080">
    <property type="term" value="P:CENP-A containing chromatin assembly"/>
    <property type="evidence" value="ECO:0000315"/>
    <property type="project" value="PomBase"/>
</dbReference>
<dbReference type="GO" id="GO:0006338">
    <property type="term" value="P:chromatin remodeling"/>
    <property type="evidence" value="ECO:0000318"/>
    <property type="project" value="GO_Central"/>
</dbReference>
<dbReference type="GO" id="GO:0140861">
    <property type="term" value="P:DNA repair-dependent chromatin remodeling"/>
    <property type="evidence" value="ECO:0000269"/>
    <property type="project" value="PomBase"/>
</dbReference>
<dbReference type="GO" id="GO:0045815">
    <property type="term" value="P:transcription initiation-coupled chromatin remodeling"/>
    <property type="evidence" value="ECO:0000269"/>
    <property type="project" value="PomBase"/>
</dbReference>
<dbReference type="InterPro" id="IPR029525">
    <property type="entry name" value="INO80C/Ies6"/>
</dbReference>
<dbReference type="InterPro" id="IPR013272">
    <property type="entry name" value="Vps72/YL1_C"/>
</dbReference>
<dbReference type="PANTHER" id="PTHR31200">
    <property type="entry name" value="INO80 COMPLEX SUBUNIT C"/>
    <property type="match status" value="1"/>
</dbReference>
<dbReference type="PANTHER" id="PTHR31200:SF1">
    <property type="entry name" value="INO80 COMPLEX SUBUNIT C"/>
    <property type="match status" value="1"/>
</dbReference>
<dbReference type="Pfam" id="PF08265">
    <property type="entry name" value="YL1_C"/>
    <property type="match status" value="1"/>
</dbReference>
<dbReference type="SMART" id="SM00993">
    <property type="entry name" value="YL1_C"/>
    <property type="match status" value="1"/>
</dbReference>
<comment type="function">
    <text evidence="1">Probably involved in transcription regulation via its interaction with the INO80 complex, a chromatin remodeling complex. Also involved in the regulation of telomere length (By similarity).</text>
</comment>
<comment type="subunit">
    <text evidence="1">Component of the chromatin-remodeling INO80 complex.</text>
</comment>
<comment type="subcellular location">
    <subcellularLocation>
        <location evidence="1">Nucleus</location>
    </subcellularLocation>
</comment>
<comment type="similarity">
    <text evidence="2">Belongs to the IES6 family.</text>
</comment>
<reference key="1">
    <citation type="journal article" date="2002" name="Nature">
        <title>The genome sequence of Schizosaccharomyces pombe.</title>
        <authorList>
            <person name="Wood V."/>
            <person name="Gwilliam R."/>
            <person name="Rajandream M.A."/>
            <person name="Lyne M.H."/>
            <person name="Lyne R."/>
            <person name="Stewart A."/>
            <person name="Sgouros J.G."/>
            <person name="Peat N."/>
            <person name="Hayles J."/>
            <person name="Baker S.G."/>
            <person name="Basham D."/>
            <person name="Bowman S."/>
            <person name="Brooks K."/>
            <person name="Brown D."/>
            <person name="Brown S."/>
            <person name="Chillingworth T."/>
            <person name="Churcher C.M."/>
            <person name="Collins M."/>
            <person name="Connor R."/>
            <person name="Cronin A."/>
            <person name="Davis P."/>
            <person name="Feltwell T."/>
            <person name="Fraser A."/>
            <person name="Gentles S."/>
            <person name="Goble A."/>
            <person name="Hamlin N."/>
            <person name="Harris D.E."/>
            <person name="Hidalgo J."/>
            <person name="Hodgson G."/>
            <person name="Holroyd S."/>
            <person name="Hornsby T."/>
            <person name="Howarth S."/>
            <person name="Huckle E.J."/>
            <person name="Hunt S."/>
            <person name="Jagels K."/>
            <person name="James K.D."/>
            <person name="Jones L."/>
            <person name="Jones M."/>
            <person name="Leather S."/>
            <person name="McDonald S."/>
            <person name="McLean J."/>
            <person name="Mooney P."/>
            <person name="Moule S."/>
            <person name="Mungall K.L."/>
            <person name="Murphy L.D."/>
            <person name="Niblett D."/>
            <person name="Odell C."/>
            <person name="Oliver K."/>
            <person name="O'Neil S."/>
            <person name="Pearson D."/>
            <person name="Quail M.A."/>
            <person name="Rabbinowitsch E."/>
            <person name="Rutherford K.M."/>
            <person name="Rutter S."/>
            <person name="Saunders D."/>
            <person name="Seeger K."/>
            <person name="Sharp S."/>
            <person name="Skelton J."/>
            <person name="Simmonds M.N."/>
            <person name="Squares R."/>
            <person name="Squares S."/>
            <person name="Stevens K."/>
            <person name="Taylor K."/>
            <person name="Taylor R.G."/>
            <person name="Tivey A."/>
            <person name="Walsh S.V."/>
            <person name="Warren T."/>
            <person name="Whitehead S."/>
            <person name="Woodward J.R."/>
            <person name="Volckaert G."/>
            <person name="Aert R."/>
            <person name="Robben J."/>
            <person name="Grymonprez B."/>
            <person name="Weltjens I."/>
            <person name="Vanstreels E."/>
            <person name="Rieger M."/>
            <person name="Schaefer M."/>
            <person name="Mueller-Auer S."/>
            <person name="Gabel C."/>
            <person name="Fuchs M."/>
            <person name="Duesterhoeft A."/>
            <person name="Fritzc C."/>
            <person name="Holzer E."/>
            <person name="Moestl D."/>
            <person name="Hilbert H."/>
            <person name="Borzym K."/>
            <person name="Langer I."/>
            <person name="Beck A."/>
            <person name="Lehrach H."/>
            <person name="Reinhardt R."/>
            <person name="Pohl T.M."/>
            <person name="Eger P."/>
            <person name="Zimmermann W."/>
            <person name="Wedler H."/>
            <person name="Wambutt R."/>
            <person name="Purnelle B."/>
            <person name="Goffeau A."/>
            <person name="Cadieu E."/>
            <person name="Dreano S."/>
            <person name="Gloux S."/>
            <person name="Lelaure V."/>
            <person name="Mottier S."/>
            <person name="Galibert F."/>
            <person name="Aves S.J."/>
            <person name="Xiang Z."/>
            <person name="Hunt C."/>
            <person name="Moore K."/>
            <person name="Hurst S.M."/>
            <person name="Lucas M."/>
            <person name="Rochet M."/>
            <person name="Gaillardin C."/>
            <person name="Tallada V.A."/>
            <person name="Garzon A."/>
            <person name="Thode G."/>
            <person name="Daga R.R."/>
            <person name="Cruzado L."/>
            <person name="Jimenez J."/>
            <person name="Sanchez M."/>
            <person name="del Rey F."/>
            <person name="Benito J."/>
            <person name="Dominguez A."/>
            <person name="Revuelta J.L."/>
            <person name="Moreno S."/>
            <person name="Armstrong J."/>
            <person name="Forsburg S.L."/>
            <person name="Cerutti L."/>
            <person name="Lowe T."/>
            <person name="McCombie W.R."/>
            <person name="Paulsen I."/>
            <person name="Potashkin J."/>
            <person name="Shpakovski G.V."/>
            <person name="Ussery D."/>
            <person name="Barrell B.G."/>
            <person name="Nurse P."/>
        </authorList>
    </citation>
    <scope>NUCLEOTIDE SEQUENCE [LARGE SCALE GENOMIC DNA]</scope>
    <source>
        <strain>972 / ATCC 24843</strain>
    </source>
</reference>
<keyword id="KW-0539">Nucleus</keyword>
<keyword id="KW-1185">Reference proteome</keyword>
<keyword id="KW-0804">Transcription</keyword>
<keyword id="KW-0805">Transcription regulation</keyword>
<gene>
    <name type="primary">ies6</name>
    <name type="ORF">SPAC222.04c</name>
</gene>
<evidence type="ECO:0000250" key="1"/>
<evidence type="ECO:0000305" key="2"/>
<protein>
    <recommendedName>
        <fullName>Chromatin-remodeling complex subunit ies6</fullName>
    </recommendedName>
</protein>
<organism>
    <name type="scientific">Schizosaccharomyces pombe (strain 972 / ATCC 24843)</name>
    <name type="common">Fission yeast</name>
    <dbReference type="NCBI Taxonomy" id="284812"/>
    <lineage>
        <taxon>Eukaryota</taxon>
        <taxon>Fungi</taxon>
        <taxon>Dikarya</taxon>
        <taxon>Ascomycota</taxon>
        <taxon>Taphrinomycotina</taxon>
        <taxon>Schizosaccharomycetes</taxon>
        <taxon>Schizosaccharomycetales</taxon>
        <taxon>Schizosaccharomycetaceae</taxon>
        <taxon>Schizosaccharomyces</taxon>
    </lineage>
</organism>
<accession>Q9UTE8</accession>
<feature type="chain" id="PRO_0000339139" description="Chromatin-remodeling complex subunit ies6">
    <location>
        <begin position="1"/>
        <end position="117"/>
    </location>
</feature>
<sequence length="117" mass="13476">MEKNSSVDSLDISLLARPFRNPNYKAQPRRNRNLRQIIQNDPVQNEPSKFSYSSIEAPPSVLPQPKYCDVTGLLAIYTDPKTRLRYHNKEIYGLIRELPSGADQEYLKLRSSDVVLK</sequence>
<proteinExistence type="inferred from homology"/>
<name>IES6_SCHPO</name>